<accession>C3KE47</accession>
<keyword id="KW-0648">Protein biosynthesis</keyword>
<keyword id="KW-0808">Transferase</keyword>
<reference key="1">
    <citation type="journal article" date="2009" name="Genome Biol.">
        <title>Genomic and genetic analyses of diversity and plant interactions of Pseudomonas fluorescens.</title>
        <authorList>
            <person name="Silby M.W."/>
            <person name="Cerdeno-Tarraga A.M."/>
            <person name="Vernikos G.S."/>
            <person name="Giddens S.R."/>
            <person name="Jackson R.W."/>
            <person name="Preston G.M."/>
            <person name="Zhang X.-X."/>
            <person name="Moon C.D."/>
            <person name="Gehrig S.M."/>
            <person name="Godfrey S.A.C."/>
            <person name="Knight C.G."/>
            <person name="Malone J.G."/>
            <person name="Robinson Z."/>
            <person name="Spiers A.J."/>
            <person name="Harris S."/>
            <person name="Challis G.L."/>
            <person name="Yaxley A.M."/>
            <person name="Harris D."/>
            <person name="Seeger K."/>
            <person name="Murphy L."/>
            <person name="Rutter S."/>
            <person name="Squares R."/>
            <person name="Quail M.A."/>
            <person name="Saunders E."/>
            <person name="Mavromatis K."/>
            <person name="Brettin T.S."/>
            <person name="Bentley S.D."/>
            <person name="Hothersall J."/>
            <person name="Stephens E."/>
            <person name="Thomas C.M."/>
            <person name="Parkhill J."/>
            <person name="Levy S.B."/>
            <person name="Rainey P.B."/>
            <person name="Thomson N.R."/>
        </authorList>
    </citation>
    <scope>NUCLEOTIDE SEQUENCE [LARGE SCALE GENOMIC DNA]</scope>
    <source>
        <strain>SBW25</strain>
    </source>
</reference>
<evidence type="ECO:0000255" key="1">
    <source>
        <dbReference type="HAMAP-Rule" id="MF_00182"/>
    </source>
</evidence>
<dbReference type="EC" id="2.1.2.9" evidence="1"/>
<dbReference type="EMBL" id="AM181176">
    <property type="protein sequence ID" value="CAY46302.1"/>
    <property type="molecule type" value="Genomic_DNA"/>
</dbReference>
<dbReference type="RefSeq" id="WP_012721465.1">
    <property type="nucleotide sequence ID" value="NC_012660.1"/>
</dbReference>
<dbReference type="SMR" id="C3KE47"/>
<dbReference type="STRING" id="294.SRM1_00072"/>
<dbReference type="PATRIC" id="fig|216595.4.peg.259"/>
<dbReference type="eggNOG" id="COG0223">
    <property type="taxonomic scope" value="Bacteria"/>
</dbReference>
<dbReference type="HOGENOM" id="CLU_033347_1_2_6"/>
<dbReference type="OrthoDB" id="9802815at2"/>
<dbReference type="GO" id="GO:0005829">
    <property type="term" value="C:cytosol"/>
    <property type="evidence" value="ECO:0007669"/>
    <property type="project" value="TreeGrafter"/>
</dbReference>
<dbReference type="GO" id="GO:0004479">
    <property type="term" value="F:methionyl-tRNA formyltransferase activity"/>
    <property type="evidence" value="ECO:0007669"/>
    <property type="project" value="UniProtKB-UniRule"/>
</dbReference>
<dbReference type="CDD" id="cd08646">
    <property type="entry name" value="FMT_core_Met-tRNA-FMT_N"/>
    <property type="match status" value="1"/>
</dbReference>
<dbReference type="CDD" id="cd08704">
    <property type="entry name" value="Met_tRNA_FMT_C"/>
    <property type="match status" value="1"/>
</dbReference>
<dbReference type="FunFam" id="3.40.50.170:FF:000003">
    <property type="entry name" value="Methionyl-tRNA formyltransferase"/>
    <property type="match status" value="1"/>
</dbReference>
<dbReference type="Gene3D" id="3.10.25.10">
    <property type="entry name" value="Formyl transferase, C-terminal domain"/>
    <property type="match status" value="1"/>
</dbReference>
<dbReference type="Gene3D" id="3.40.50.170">
    <property type="entry name" value="Formyl transferase, N-terminal domain"/>
    <property type="match status" value="1"/>
</dbReference>
<dbReference type="HAMAP" id="MF_00182">
    <property type="entry name" value="Formyl_trans"/>
    <property type="match status" value="1"/>
</dbReference>
<dbReference type="InterPro" id="IPR005794">
    <property type="entry name" value="Fmt"/>
</dbReference>
<dbReference type="InterPro" id="IPR005793">
    <property type="entry name" value="Formyl_trans_C"/>
</dbReference>
<dbReference type="InterPro" id="IPR037022">
    <property type="entry name" value="Formyl_trans_C_sf"/>
</dbReference>
<dbReference type="InterPro" id="IPR002376">
    <property type="entry name" value="Formyl_transf_N"/>
</dbReference>
<dbReference type="InterPro" id="IPR036477">
    <property type="entry name" value="Formyl_transf_N_sf"/>
</dbReference>
<dbReference type="InterPro" id="IPR011034">
    <property type="entry name" value="Formyl_transferase-like_C_sf"/>
</dbReference>
<dbReference type="InterPro" id="IPR001555">
    <property type="entry name" value="GART_AS"/>
</dbReference>
<dbReference type="InterPro" id="IPR044135">
    <property type="entry name" value="Met-tRNA-FMT_C"/>
</dbReference>
<dbReference type="InterPro" id="IPR041711">
    <property type="entry name" value="Met-tRNA-FMT_N"/>
</dbReference>
<dbReference type="NCBIfam" id="TIGR00460">
    <property type="entry name" value="fmt"/>
    <property type="match status" value="1"/>
</dbReference>
<dbReference type="PANTHER" id="PTHR11138">
    <property type="entry name" value="METHIONYL-TRNA FORMYLTRANSFERASE"/>
    <property type="match status" value="1"/>
</dbReference>
<dbReference type="PANTHER" id="PTHR11138:SF5">
    <property type="entry name" value="METHIONYL-TRNA FORMYLTRANSFERASE, MITOCHONDRIAL"/>
    <property type="match status" value="1"/>
</dbReference>
<dbReference type="Pfam" id="PF02911">
    <property type="entry name" value="Formyl_trans_C"/>
    <property type="match status" value="1"/>
</dbReference>
<dbReference type="Pfam" id="PF00551">
    <property type="entry name" value="Formyl_trans_N"/>
    <property type="match status" value="1"/>
</dbReference>
<dbReference type="SUPFAM" id="SSF50486">
    <property type="entry name" value="FMT C-terminal domain-like"/>
    <property type="match status" value="1"/>
</dbReference>
<dbReference type="SUPFAM" id="SSF53328">
    <property type="entry name" value="Formyltransferase"/>
    <property type="match status" value="1"/>
</dbReference>
<dbReference type="PROSITE" id="PS00373">
    <property type="entry name" value="GART"/>
    <property type="match status" value="1"/>
</dbReference>
<comment type="function">
    <text evidence="1">Attaches a formyl group to the free amino group of methionyl-tRNA(fMet). The formyl group appears to play a dual role in the initiator identity of N-formylmethionyl-tRNA by promoting its recognition by IF2 and preventing the misappropriation of this tRNA by the elongation apparatus.</text>
</comment>
<comment type="catalytic activity">
    <reaction evidence="1">
        <text>L-methionyl-tRNA(fMet) + (6R)-10-formyltetrahydrofolate = N-formyl-L-methionyl-tRNA(fMet) + (6S)-5,6,7,8-tetrahydrofolate + H(+)</text>
        <dbReference type="Rhea" id="RHEA:24380"/>
        <dbReference type="Rhea" id="RHEA-COMP:9952"/>
        <dbReference type="Rhea" id="RHEA-COMP:9953"/>
        <dbReference type="ChEBI" id="CHEBI:15378"/>
        <dbReference type="ChEBI" id="CHEBI:57453"/>
        <dbReference type="ChEBI" id="CHEBI:78530"/>
        <dbReference type="ChEBI" id="CHEBI:78844"/>
        <dbReference type="ChEBI" id="CHEBI:195366"/>
        <dbReference type="EC" id="2.1.2.9"/>
    </reaction>
</comment>
<comment type="similarity">
    <text evidence="1">Belongs to the Fmt family.</text>
</comment>
<sequence>MTEPLRIVFAGTPEFAAEHLKALLTSPHDVVAVYTQPDRPAGRGQKLMPSPVKQLALEHNIPVLQPPTLRNAEAQAELAALNPDLLVVVAYGLILPQAVLDIPRLGCINSHASLLPRWRGAAPIQRAVEAGDSESGVTVMRMEAGLDTGPMLLKVTTPITAADTGGSLHDRLAELGPPAVIQAIAGLAAGTLEGEVQDDSLATYAHKLNKDEARIDWSRPAVELERLVRAFNPWPICHSTLNGEALKVLAATLAEGAGAPGEIIGASKDGLLVACGEQALCLTRLQLPGGKALNFSDLFNSRREKFALGTVLGVVAQ</sequence>
<organism>
    <name type="scientific">Pseudomonas fluorescens (strain SBW25)</name>
    <dbReference type="NCBI Taxonomy" id="216595"/>
    <lineage>
        <taxon>Bacteria</taxon>
        <taxon>Pseudomonadati</taxon>
        <taxon>Pseudomonadota</taxon>
        <taxon>Gammaproteobacteria</taxon>
        <taxon>Pseudomonadales</taxon>
        <taxon>Pseudomonadaceae</taxon>
        <taxon>Pseudomonas</taxon>
    </lineage>
</organism>
<gene>
    <name evidence="1" type="primary">fmt</name>
    <name type="ordered locus">PFLU_0017</name>
</gene>
<protein>
    <recommendedName>
        <fullName evidence="1">Methionyl-tRNA formyltransferase</fullName>
        <ecNumber evidence="1">2.1.2.9</ecNumber>
    </recommendedName>
</protein>
<proteinExistence type="inferred from homology"/>
<name>FMT_PSEFS</name>
<feature type="chain" id="PRO_1000203872" description="Methionyl-tRNA formyltransferase">
    <location>
        <begin position="1"/>
        <end position="317"/>
    </location>
</feature>
<feature type="binding site" evidence="1">
    <location>
        <begin position="113"/>
        <end position="116"/>
    </location>
    <ligand>
        <name>(6S)-5,6,7,8-tetrahydrofolate</name>
        <dbReference type="ChEBI" id="CHEBI:57453"/>
    </ligand>
</feature>